<name>P34_RICRS</name>
<dbReference type="EMBL" id="X56068">
    <property type="protein sequence ID" value="CAA39546.1"/>
    <property type="molecule type" value="Genomic_DNA"/>
</dbReference>
<dbReference type="EMBL" id="CP000848">
    <property type="protein sequence ID" value="ABV76855.1"/>
    <property type="molecule type" value="Genomic_DNA"/>
</dbReference>
<dbReference type="PIR" id="S13095">
    <property type="entry name" value="S13095"/>
</dbReference>
<dbReference type="RefSeq" id="WP_012151395.1">
    <property type="nucleotide sequence ID" value="NZ_CP121767.1"/>
</dbReference>
<dbReference type="SMR" id="P21559"/>
<dbReference type="GeneID" id="79937888"/>
<dbReference type="KEGG" id="rri:A1G_07070"/>
<dbReference type="HOGENOM" id="CLU_013430_3_0_5"/>
<dbReference type="Proteomes" id="UP000006832">
    <property type="component" value="Chromosome"/>
</dbReference>
<dbReference type="GO" id="GO:0005886">
    <property type="term" value="C:plasma membrane"/>
    <property type="evidence" value="ECO:0007669"/>
    <property type="project" value="UniProtKB-SubCell"/>
</dbReference>
<dbReference type="GO" id="GO:0015086">
    <property type="term" value="F:cadmium ion transmembrane transporter activity"/>
    <property type="evidence" value="ECO:0007669"/>
    <property type="project" value="TreeGrafter"/>
</dbReference>
<dbReference type="GO" id="GO:0015093">
    <property type="term" value="F:ferrous iron transmembrane transporter activity"/>
    <property type="evidence" value="ECO:0007669"/>
    <property type="project" value="TreeGrafter"/>
</dbReference>
<dbReference type="GO" id="GO:0015341">
    <property type="term" value="F:zinc efflux antiporter activity"/>
    <property type="evidence" value="ECO:0007669"/>
    <property type="project" value="TreeGrafter"/>
</dbReference>
<dbReference type="GO" id="GO:0006882">
    <property type="term" value="P:intracellular zinc ion homeostasis"/>
    <property type="evidence" value="ECO:0007669"/>
    <property type="project" value="TreeGrafter"/>
</dbReference>
<dbReference type="FunFam" id="3.30.70.1350:FF:000002">
    <property type="entry name" value="Ferrous-iron efflux pump FieF"/>
    <property type="match status" value="1"/>
</dbReference>
<dbReference type="Gene3D" id="1.20.1510.10">
    <property type="entry name" value="Cation efflux protein transmembrane domain"/>
    <property type="match status" value="1"/>
</dbReference>
<dbReference type="Gene3D" id="3.30.70.1350">
    <property type="entry name" value="Cation efflux protein, cytoplasmic domain"/>
    <property type="match status" value="1"/>
</dbReference>
<dbReference type="InterPro" id="IPR002524">
    <property type="entry name" value="Cation_efflux"/>
</dbReference>
<dbReference type="InterPro" id="IPR027470">
    <property type="entry name" value="Cation_efflux_CTD"/>
</dbReference>
<dbReference type="InterPro" id="IPR036837">
    <property type="entry name" value="Cation_efflux_CTD_sf"/>
</dbReference>
<dbReference type="InterPro" id="IPR027469">
    <property type="entry name" value="Cation_efflux_TMD_sf"/>
</dbReference>
<dbReference type="InterPro" id="IPR050291">
    <property type="entry name" value="CDF_Transporter"/>
</dbReference>
<dbReference type="NCBIfam" id="TIGR01297">
    <property type="entry name" value="CDF"/>
    <property type="match status" value="1"/>
</dbReference>
<dbReference type="PANTHER" id="PTHR43840:SF41">
    <property type="entry name" value="CATION-EFFLUX PUMP FIEF"/>
    <property type="match status" value="1"/>
</dbReference>
<dbReference type="PANTHER" id="PTHR43840">
    <property type="entry name" value="MITOCHONDRIAL METAL TRANSPORTER 1-RELATED"/>
    <property type="match status" value="1"/>
</dbReference>
<dbReference type="Pfam" id="PF01545">
    <property type="entry name" value="Cation_efflux"/>
    <property type="match status" value="1"/>
</dbReference>
<dbReference type="Pfam" id="PF16916">
    <property type="entry name" value="ZT_dimer"/>
    <property type="match status" value="1"/>
</dbReference>
<dbReference type="SUPFAM" id="SSF160240">
    <property type="entry name" value="Cation efflux protein cytoplasmic domain-like"/>
    <property type="match status" value="1"/>
</dbReference>
<dbReference type="SUPFAM" id="SSF161111">
    <property type="entry name" value="Cation efflux protein transmembrane domain-like"/>
    <property type="match status" value="1"/>
</dbReference>
<feature type="chain" id="PRO_0000206137" description="Protein p34">
    <location>
        <begin position="1"/>
        <end position="301"/>
    </location>
</feature>
<feature type="transmembrane region" description="Helical" evidence="1">
    <location>
        <begin position="15"/>
        <end position="35"/>
    </location>
</feature>
<feature type="transmembrane region" description="Helical" evidence="1">
    <location>
        <begin position="40"/>
        <end position="60"/>
    </location>
</feature>
<feature type="transmembrane region" description="Helical" evidence="1">
    <location>
        <begin position="83"/>
        <end position="103"/>
    </location>
</feature>
<feature type="transmembrane region" description="Helical" evidence="1">
    <location>
        <begin position="120"/>
        <end position="140"/>
    </location>
</feature>
<feature type="transmembrane region" description="Helical" evidence="1">
    <location>
        <begin position="171"/>
        <end position="191"/>
    </location>
</feature>
<protein>
    <recommendedName>
        <fullName>Protein p34</fullName>
    </recommendedName>
</protein>
<sequence>MDTNSRNRLIKSASYLSVTTALIILSIKLYAWVVTDSQSILAALIDSMLDITSSFINLIALRFALQPPDHHHRFGYEKLQDLTIFSQSIFFFASAFFVGFSSVKSLFEKTKPENISDGTTVMYVCIFLTIILVFYQTYVIKKTGSEIVKADKLHYFTDLLTNVIVIISINLSDYFWFVDPLFGVVISLYIFHSSYSLFKKAFKNLVDHELPEQDRQKIISIVNNHLGAKGMHEMKTRYAGQKAFIQCHLEMDGNMSLYNAHKISDEIAFEILQEFPEAEIIIHQDPFGIEEHVKYREYIVR</sequence>
<reference key="1">
    <citation type="journal article" date="1990" name="Nucleic Acids Res.">
        <title>Nucleotide sequence of the P34 gene from Rickettsia rickettsii.</title>
        <authorList>
            <person name="Anderson B.E."/>
            <person name="Baumstark B.R."/>
            <person name="Bellini W.J."/>
        </authorList>
    </citation>
    <scope>NUCLEOTIDE SEQUENCE [GENOMIC DNA]</scope>
</reference>
<reference key="2">
    <citation type="submission" date="2007-09" db="EMBL/GenBank/DDBJ databases">
        <title>Complete genome sequence of Rickettsia rickettsii.</title>
        <authorList>
            <person name="Madan A."/>
            <person name="Fahey J."/>
            <person name="Helton E."/>
            <person name="Ketteman M."/>
            <person name="Madan A."/>
            <person name="Rodrigues S."/>
            <person name="Sanchez A."/>
            <person name="Dasch G."/>
            <person name="Eremeeva M."/>
        </authorList>
    </citation>
    <scope>NUCLEOTIDE SEQUENCE [LARGE SCALE GENOMIC DNA]</scope>
    <source>
        <strain>Sheila Smith</strain>
    </source>
</reference>
<accession>P21559</accession>
<accession>A8GTY0</accession>
<gene>
    <name type="primary">p34</name>
    <name type="ordered locus">A1G_07070</name>
</gene>
<keyword id="KW-1003">Cell membrane</keyword>
<keyword id="KW-0472">Membrane</keyword>
<keyword id="KW-0812">Transmembrane</keyword>
<keyword id="KW-1133">Transmembrane helix</keyword>
<keyword id="KW-0813">Transport</keyword>
<evidence type="ECO:0000255" key="1"/>
<evidence type="ECO:0000305" key="2"/>
<comment type="subcellular location">
    <subcellularLocation>
        <location evidence="2">Cell membrane</location>
        <topology evidence="2">Multi-pass membrane protein</topology>
    </subcellularLocation>
</comment>
<comment type="similarity">
    <text evidence="2">Belongs to the cation diffusion facilitator (CDF) transporter (TC 2.A.4) family.</text>
</comment>
<organism>
    <name type="scientific">Rickettsia rickettsii (strain Sheila Smith)</name>
    <dbReference type="NCBI Taxonomy" id="392021"/>
    <lineage>
        <taxon>Bacteria</taxon>
        <taxon>Pseudomonadati</taxon>
        <taxon>Pseudomonadota</taxon>
        <taxon>Alphaproteobacteria</taxon>
        <taxon>Rickettsiales</taxon>
        <taxon>Rickettsiaceae</taxon>
        <taxon>Rickettsieae</taxon>
        <taxon>Rickettsia</taxon>
        <taxon>spotted fever group</taxon>
    </lineage>
</organism>
<proteinExistence type="inferred from homology"/>